<sequence>MISHILLDIEGTTCPVTFVTETLFPYAQLALKDFLERHKDDPSISQLINNAEDEWMQDQDKQSATLRHSSEEIQQPKHLKIESYLQLLIASDKKSTALKDIQGKVWKEGYTTGKITSELFEDAYEGLKKWHKQGFTLGIYSSGSVEAQRLLYKYTSKGDIENLFSHWFDTHIGNKKEQRSYTAIASSMACKPQNILFISDNSDECDAAKGAGLFTLYSLREGNPQQEPRDHPIIINLGDVDQWLK</sequence>
<comment type="function">
    <text evidence="1">Bifunctional enzyme that catalyzes the enolization of 2,3-diketo-5-methylthiopentyl-1-phosphate (DK-MTP-1-P) into the intermediate 2-hydroxy-3-keto-5-methylthiopentenyl-1-phosphate (HK-MTPenyl-1-P), which is then dephosphorylated to form the acireductone 1,2-dihydroxy-3-keto-5-methylthiopentene (DHK-MTPene).</text>
</comment>
<comment type="catalytic activity">
    <reaction evidence="1">
        <text>5-methylsulfanyl-2,3-dioxopentyl phosphate + H2O = 1,2-dihydroxy-5-(methylsulfanyl)pent-1-en-3-one + phosphate</text>
        <dbReference type="Rhea" id="RHEA:21700"/>
        <dbReference type="ChEBI" id="CHEBI:15377"/>
        <dbReference type="ChEBI" id="CHEBI:43474"/>
        <dbReference type="ChEBI" id="CHEBI:49252"/>
        <dbReference type="ChEBI" id="CHEBI:58828"/>
        <dbReference type="EC" id="3.1.3.77"/>
    </reaction>
</comment>
<comment type="cofactor">
    <cofactor evidence="1">
        <name>Mg(2+)</name>
        <dbReference type="ChEBI" id="CHEBI:18420"/>
    </cofactor>
    <text evidence="1">Binds 1 Mg(2+) ion per subunit.</text>
</comment>
<comment type="pathway">
    <text evidence="1">Amino-acid biosynthesis; L-methionine biosynthesis via salvage pathway; L-methionine from S-methyl-5-thio-alpha-D-ribose 1-phosphate: step 3/6.</text>
</comment>
<comment type="pathway">
    <text evidence="1">Amino-acid biosynthesis; L-methionine biosynthesis via salvage pathway; L-methionine from S-methyl-5-thio-alpha-D-ribose 1-phosphate: step 4/6.</text>
</comment>
<comment type="subunit">
    <text evidence="1">Monomer.</text>
</comment>
<comment type="similarity">
    <text evidence="1">Belongs to the HAD-like hydrolase superfamily. MasA/MtnC family.</text>
</comment>
<gene>
    <name evidence="1" type="primary">mtnC</name>
    <name type="ordered locus">Syncc9902_1846</name>
</gene>
<feature type="chain" id="PRO_0000357422" description="Enolase-phosphatase E1">
    <location>
        <begin position="1"/>
        <end position="245"/>
    </location>
</feature>
<proteinExistence type="inferred from homology"/>
<protein>
    <recommendedName>
        <fullName evidence="1">Enolase-phosphatase E1</fullName>
        <ecNumber evidence="1">3.1.3.77</ecNumber>
    </recommendedName>
    <alternativeName>
        <fullName evidence="1">2,3-diketo-5-methylthio-1-phosphopentane phosphatase</fullName>
    </alternativeName>
</protein>
<organism>
    <name type="scientific">Synechococcus sp. (strain CC9902)</name>
    <dbReference type="NCBI Taxonomy" id="316279"/>
    <lineage>
        <taxon>Bacteria</taxon>
        <taxon>Bacillati</taxon>
        <taxon>Cyanobacteriota</taxon>
        <taxon>Cyanophyceae</taxon>
        <taxon>Synechococcales</taxon>
        <taxon>Synechococcaceae</taxon>
        <taxon>Synechococcus</taxon>
    </lineage>
</organism>
<evidence type="ECO:0000255" key="1">
    <source>
        <dbReference type="HAMAP-Rule" id="MF_01681"/>
    </source>
</evidence>
<keyword id="KW-0028">Amino-acid biosynthesis</keyword>
<keyword id="KW-0378">Hydrolase</keyword>
<keyword id="KW-0460">Magnesium</keyword>
<keyword id="KW-0479">Metal-binding</keyword>
<keyword id="KW-0486">Methionine biosynthesis</keyword>
<keyword id="KW-1185">Reference proteome</keyword>
<name>MTNC_SYNS9</name>
<reference key="1">
    <citation type="submission" date="2005-08" db="EMBL/GenBank/DDBJ databases">
        <title>Complete sequence of Synechococcus sp. CC9902.</title>
        <authorList>
            <person name="Copeland A."/>
            <person name="Lucas S."/>
            <person name="Lapidus A."/>
            <person name="Barry K."/>
            <person name="Detter J.C."/>
            <person name="Glavina T."/>
            <person name="Hammon N."/>
            <person name="Israni S."/>
            <person name="Pitluck S."/>
            <person name="Martinez M."/>
            <person name="Schmutz J."/>
            <person name="Larimer F."/>
            <person name="Land M."/>
            <person name="Kyrpides N."/>
            <person name="Ivanova N."/>
            <person name="Richardson P."/>
        </authorList>
    </citation>
    <scope>NUCLEOTIDE SEQUENCE [LARGE SCALE GENOMIC DNA]</scope>
    <source>
        <strain>CC9902</strain>
    </source>
</reference>
<accession>Q3AWF3</accession>
<dbReference type="EC" id="3.1.3.77" evidence="1"/>
<dbReference type="EMBL" id="CP000097">
    <property type="protein sequence ID" value="ABB26803.1"/>
    <property type="molecule type" value="Genomic_DNA"/>
</dbReference>
<dbReference type="RefSeq" id="WP_011360607.1">
    <property type="nucleotide sequence ID" value="NC_007513.1"/>
</dbReference>
<dbReference type="SMR" id="Q3AWF3"/>
<dbReference type="STRING" id="316279.Syncc9902_1846"/>
<dbReference type="KEGG" id="sye:Syncc9902_1846"/>
<dbReference type="eggNOG" id="COG4229">
    <property type="taxonomic scope" value="Bacteria"/>
</dbReference>
<dbReference type="HOGENOM" id="CLU_023273_0_0_3"/>
<dbReference type="OrthoDB" id="9797416at2"/>
<dbReference type="UniPathway" id="UPA00904">
    <property type="reaction ID" value="UER00876"/>
</dbReference>
<dbReference type="UniPathway" id="UPA00904">
    <property type="reaction ID" value="UER00877"/>
</dbReference>
<dbReference type="Proteomes" id="UP000002712">
    <property type="component" value="Chromosome"/>
</dbReference>
<dbReference type="GO" id="GO:0043715">
    <property type="term" value="F:2,3-diketo-5-methylthiopentyl-1-phosphate enolase activity"/>
    <property type="evidence" value="ECO:0007669"/>
    <property type="project" value="UniProtKB-UniRule"/>
</dbReference>
<dbReference type="GO" id="GO:0043716">
    <property type="term" value="F:2-hydroxy-3-keto-5-methylthiopentenyl-1-phosphate phosphatase activity"/>
    <property type="evidence" value="ECO:0007669"/>
    <property type="project" value="UniProtKB-UniRule"/>
</dbReference>
<dbReference type="GO" id="GO:0043874">
    <property type="term" value="F:acireductone synthase activity"/>
    <property type="evidence" value="ECO:0007669"/>
    <property type="project" value="UniProtKB-EC"/>
</dbReference>
<dbReference type="GO" id="GO:0000287">
    <property type="term" value="F:magnesium ion binding"/>
    <property type="evidence" value="ECO:0007669"/>
    <property type="project" value="UniProtKB-UniRule"/>
</dbReference>
<dbReference type="GO" id="GO:0019509">
    <property type="term" value="P:L-methionine salvage from methylthioadenosine"/>
    <property type="evidence" value="ECO:0007669"/>
    <property type="project" value="UniProtKB-UniRule"/>
</dbReference>
<dbReference type="CDD" id="cd01629">
    <property type="entry name" value="HAD_EP"/>
    <property type="match status" value="1"/>
</dbReference>
<dbReference type="Gene3D" id="1.10.720.60">
    <property type="match status" value="1"/>
</dbReference>
<dbReference type="Gene3D" id="3.40.50.1000">
    <property type="entry name" value="HAD superfamily/HAD-like"/>
    <property type="match status" value="1"/>
</dbReference>
<dbReference type="HAMAP" id="MF_01681">
    <property type="entry name" value="Salvage_MtnC"/>
    <property type="match status" value="1"/>
</dbReference>
<dbReference type="InterPro" id="IPR023943">
    <property type="entry name" value="Enolase-ppase_E1"/>
</dbReference>
<dbReference type="InterPro" id="IPR036412">
    <property type="entry name" value="HAD-like_sf"/>
</dbReference>
<dbReference type="InterPro" id="IPR006439">
    <property type="entry name" value="HAD-SF_hydro_IA"/>
</dbReference>
<dbReference type="InterPro" id="IPR023214">
    <property type="entry name" value="HAD_sf"/>
</dbReference>
<dbReference type="NCBIfam" id="TIGR01691">
    <property type="entry name" value="enolase-ppase"/>
    <property type="match status" value="1"/>
</dbReference>
<dbReference type="NCBIfam" id="TIGR01549">
    <property type="entry name" value="HAD-SF-IA-v1"/>
    <property type="match status" value="1"/>
</dbReference>
<dbReference type="PANTHER" id="PTHR20371">
    <property type="entry name" value="ENOLASE-PHOSPHATASE E1"/>
    <property type="match status" value="1"/>
</dbReference>
<dbReference type="PANTHER" id="PTHR20371:SF1">
    <property type="entry name" value="ENOLASE-PHOSPHATASE E1"/>
    <property type="match status" value="1"/>
</dbReference>
<dbReference type="Pfam" id="PF00702">
    <property type="entry name" value="Hydrolase"/>
    <property type="match status" value="1"/>
</dbReference>
<dbReference type="SFLD" id="SFLDG01129">
    <property type="entry name" value="C1.5:_HAD__Beta-PGM__Phosphata"/>
    <property type="match status" value="1"/>
</dbReference>
<dbReference type="SFLD" id="SFLDF00044">
    <property type="entry name" value="enolase-phosphatase"/>
    <property type="match status" value="1"/>
</dbReference>
<dbReference type="SUPFAM" id="SSF56784">
    <property type="entry name" value="HAD-like"/>
    <property type="match status" value="1"/>
</dbReference>